<keyword id="KW-0276">Fatty acid metabolism</keyword>
<keyword id="KW-0436">Ligase</keyword>
<keyword id="KW-0443">Lipid metabolism</keyword>
<keyword id="KW-1185">Reference proteome</keyword>
<protein>
    <recommendedName>
        <fullName>Probable acyl-activating enzyme 6</fullName>
        <ecNumber>6.2.1.-</ecNumber>
    </recommendedName>
    <alternativeName>
        <fullName>AMP-binding protein 6</fullName>
        <shortName>AtAMPBP6</shortName>
    </alternativeName>
</protein>
<accession>Q9FFE9</accession>
<accession>Q8RY75</accession>
<dbReference type="EC" id="6.2.1.-"/>
<dbReference type="EMBL" id="AF503765">
    <property type="protein sequence ID" value="AAM28623.1"/>
    <property type="molecule type" value="mRNA"/>
</dbReference>
<dbReference type="EMBL" id="AB005242">
    <property type="protein sequence ID" value="BAB09601.1"/>
    <property type="molecule type" value="Genomic_DNA"/>
</dbReference>
<dbReference type="EMBL" id="CP002688">
    <property type="protein sequence ID" value="AED92281.1"/>
    <property type="molecule type" value="Genomic_DNA"/>
</dbReference>
<dbReference type="EMBL" id="AY074543">
    <property type="protein sequence ID" value="AAL69511.1"/>
    <property type="molecule type" value="mRNA"/>
</dbReference>
<dbReference type="RefSeq" id="NP_197138.1">
    <property type="nucleotide sequence ID" value="NM_121639.3"/>
</dbReference>
<dbReference type="SMR" id="Q9FFE9"/>
<dbReference type="FunCoup" id="Q9FFE9">
    <property type="interactions" value="107"/>
</dbReference>
<dbReference type="STRING" id="3702.Q9FFE9"/>
<dbReference type="iPTMnet" id="Q9FFE9"/>
<dbReference type="PaxDb" id="3702-AT5G16340.1"/>
<dbReference type="ProMEX" id="Q9FFE9"/>
<dbReference type="ProteomicsDB" id="245108"/>
<dbReference type="EnsemblPlants" id="AT5G16340.1">
    <property type="protein sequence ID" value="AT5G16340.1"/>
    <property type="gene ID" value="AT5G16340"/>
</dbReference>
<dbReference type="GeneID" id="831495"/>
<dbReference type="Gramene" id="AT5G16340.1">
    <property type="protein sequence ID" value="AT5G16340.1"/>
    <property type="gene ID" value="AT5G16340"/>
</dbReference>
<dbReference type="KEGG" id="ath:AT5G16340"/>
<dbReference type="Araport" id="AT5G16340"/>
<dbReference type="TAIR" id="AT5G16340"/>
<dbReference type="eggNOG" id="KOG1176">
    <property type="taxonomic scope" value="Eukaryota"/>
</dbReference>
<dbReference type="HOGENOM" id="CLU_000022_59_5_1"/>
<dbReference type="InParanoid" id="Q9FFE9"/>
<dbReference type="OMA" id="NAIMSHP"/>
<dbReference type="PhylomeDB" id="Q9FFE9"/>
<dbReference type="BioCyc" id="ARA:AT5G16340-MONOMER"/>
<dbReference type="PRO" id="PR:Q9FFE9"/>
<dbReference type="Proteomes" id="UP000006548">
    <property type="component" value="Chromosome 5"/>
</dbReference>
<dbReference type="ExpressionAtlas" id="Q9FFE9">
    <property type="expression patterns" value="baseline and differential"/>
</dbReference>
<dbReference type="GO" id="GO:0016874">
    <property type="term" value="F:ligase activity"/>
    <property type="evidence" value="ECO:0007669"/>
    <property type="project" value="UniProtKB-KW"/>
</dbReference>
<dbReference type="GO" id="GO:0006631">
    <property type="term" value="P:fatty acid metabolic process"/>
    <property type="evidence" value="ECO:0007669"/>
    <property type="project" value="UniProtKB-KW"/>
</dbReference>
<dbReference type="CDD" id="cd12118">
    <property type="entry name" value="ttLC_FACS_AEE21_like"/>
    <property type="match status" value="1"/>
</dbReference>
<dbReference type="FunFam" id="3.30.300.30:FF:000008">
    <property type="entry name" value="2,3-dihydroxybenzoate-AMP ligase"/>
    <property type="match status" value="1"/>
</dbReference>
<dbReference type="FunFam" id="3.40.50.12780:FF:000003">
    <property type="entry name" value="Long-chain-fatty-acid--CoA ligase FadD"/>
    <property type="match status" value="1"/>
</dbReference>
<dbReference type="Gene3D" id="3.30.300.30">
    <property type="match status" value="1"/>
</dbReference>
<dbReference type="Gene3D" id="3.40.50.12780">
    <property type="entry name" value="N-terminal domain of ligase-like"/>
    <property type="match status" value="1"/>
</dbReference>
<dbReference type="InterPro" id="IPR025110">
    <property type="entry name" value="AMP-bd_C"/>
</dbReference>
<dbReference type="InterPro" id="IPR045851">
    <property type="entry name" value="AMP-bd_C_sf"/>
</dbReference>
<dbReference type="InterPro" id="IPR020845">
    <property type="entry name" value="AMP-binding_CS"/>
</dbReference>
<dbReference type="InterPro" id="IPR000873">
    <property type="entry name" value="AMP-dep_synth/lig_dom"/>
</dbReference>
<dbReference type="InterPro" id="IPR042099">
    <property type="entry name" value="ANL_N_sf"/>
</dbReference>
<dbReference type="NCBIfam" id="NF006020">
    <property type="entry name" value="PRK08162.1"/>
    <property type="match status" value="1"/>
</dbReference>
<dbReference type="PANTHER" id="PTHR43859">
    <property type="entry name" value="ACYL-ACTIVATING ENZYME"/>
    <property type="match status" value="1"/>
</dbReference>
<dbReference type="PANTHER" id="PTHR43859:SF56">
    <property type="entry name" value="ACYL-ACTIVATING ENZYME 5, PEROXISOMAL-RELATED"/>
    <property type="match status" value="1"/>
</dbReference>
<dbReference type="Pfam" id="PF00501">
    <property type="entry name" value="AMP-binding"/>
    <property type="match status" value="1"/>
</dbReference>
<dbReference type="Pfam" id="PF13193">
    <property type="entry name" value="AMP-binding_C"/>
    <property type="match status" value="1"/>
</dbReference>
<dbReference type="SUPFAM" id="SSF56801">
    <property type="entry name" value="Acetyl-CoA synthetase-like"/>
    <property type="match status" value="1"/>
</dbReference>
<dbReference type="PROSITE" id="PS00455">
    <property type="entry name" value="AMP_BINDING"/>
    <property type="match status" value="1"/>
</dbReference>
<feature type="chain" id="PRO_0000415717" description="Probable acyl-activating enzyme 6">
    <location>
        <begin position="1"/>
        <end position="550"/>
    </location>
</feature>
<gene>
    <name type="primary">AAE6</name>
    <name type="synonym">AMPBP6</name>
    <name type="ordered locus">At5g16340</name>
    <name type="ORF">MQK4.6</name>
</gene>
<proteinExistence type="evidence at transcript level"/>
<name>AAE6_ARATH</name>
<sequence length="550" mass="60132">MEEMKPCAANSPPLTPIGFLERAATVYGDCTSIVYGSNTVYTWRETNLRCLRVASSLSSIGIGRSDVVSVLSPNTPAMYELQFAVPMSGAILNNINTRLDARTVSVLLRHCESKLLFVDVFSVDLAVEAVSMMTTDPPILVVIADKEEEGGVADVADLSKFSYTYDDLIERGDPGFKWIRPESEWDPVVLNYTSGTTSAPKGVVHCHRGIFVMSVDSLIDWAVPKNPVYLWTLPIFHSNGWTNPWGIAAVGGTNVCLRKFDAPLIYRLIRDHGVTHMCGAPVVLNMLSATQESQPLNHPVNILTAGSPPPATVLLRAESIGFVISHGYGLTETAGVIVSCAWKPKWNHLPASDRARLKARQGVRTVGFTEIDVVDPESGLSVERNGETVGEIVMRGSSVMLGYLKDPVGTEKALKNGWFYTGDVGVIHSDGYLEIKDRSKDIIITGGENVSSVEVETVLYTIPAVNEVAVVARPDEFWGETPCAFVSLKNGFSGKPTEEELMEYCRKKMPKYMVPKTVSFMDELPKSSTGKVTKFVLRDIAKKMGDKTIS</sequence>
<evidence type="ECO:0000250" key="1"/>
<evidence type="ECO:0000269" key="2">
    <source>
    </source>
</evidence>
<evidence type="ECO:0000305" key="3"/>
<reference key="1">
    <citation type="journal article" date="2002" name="Plant Physiol.">
        <title>Arabidopsis contains nine long-chain acyl-coenzyme A synthetase genes that participate in fatty acid and glycerolipid metabolism.</title>
        <authorList>
            <person name="Shockey J.M."/>
            <person name="Fulda M.S."/>
            <person name="Browse J.A."/>
        </authorList>
    </citation>
    <scope>NUCLEOTIDE SEQUENCE [MRNA]</scope>
</reference>
<reference key="2">
    <citation type="journal article" date="1997" name="DNA Res.">
        <title>Structural analysis of Arabidopsis thaliana chromosome 5. I. Sequence features of the 1.6 Mb regions covered by twenty physically assigned P1 clones.</title>
        <authorList>
            <person name="Sato S."/>
            <person name="Kotani H."/>
            <person name="Nakamura Y."/>
            <person name="Kaneko T."/>
            <person name="Asamizu E."/>
            <person name="Fukami M."/>
            <person name="Miyajima N."/>
            <person name="Tabata S."/>
        </authorList>
    </citation>
    <scope>NUCLEOTIDE SEQUENCE [LARGE SCALE GENOMIC DNA]</scope>
    <source>
        <strain>cv. Columbia</strain>
    </source>
</reference>
<reference key="3">
    <citation type="journal article" date="2017" name="Plant J.">
        <title>Araport11: a complete reannotation of the Arabidopsis thaliana reference genome.</title>
        <authorList>
            <person name="Cheng C.Y."/>
            <person name="Krishnakumar V."/>
            <person name="Chan A.P."/>
            <person name="Thibaud-Nissen F."/>
            <person name="Schobel S."/>
            <person name="Town C.D."/>
        </authorList>
    </citation>
    <scope>GENOME REANNOTATION</scope>
    <source>
        <strain>cv. Columbia</strain>
    </source>
</reference>
<reference key="4">
    <citation type="journal article" date="2003" name="Science">
        <title>Empirical analysis of transcriptional activity in the Arabidopsis genome.</title>
        <authorList>
            <person name="Yamada K."/>
            <person name="Lim J."/>
            <person name="Dale J.M."/>
            <person name="Chen H."/>
            <person name="Shinn P."/>
            <person name="Palm C.J."/>
            <person name="Southwick A.M."/>
            <person name="Wu H.C."/>
            <person name="Kim C.J."/>
            <person name="Nguyen M."/>
            <person name="Pham P.K."/>
            <person name="Cheuk R.F."/>
            <person name="Karlin-Newmann G."/>
            <person name="Liu S.X."/>
            <person name="Lam B."/>
            <person name="Sakano H."/>
            <person name="Wu T."/>
            <person name="Yu G."/>
            <person name="Miranda M."/>
            <person name="Quach H.L."/>
            <person name="Tripp M."/>
            <person name="Chang C.H."/>
            <person name="Lee J.M."/>
            <person name="Toriumi M.J."/>
            <person name="Chan M.M."/>
            <person name="Tang C.C."/>
            <person name="Onodera C.S."/>
            <person name="Deng J.M."/>
            <person name="Akiyama K."/>
            <person name="Ansari Y."/>
            <person name="Arakawa T."/>
            <person name="Banh J."/>
            <person name="Banno F."/>
            <person name="Bowser L."/>
            <person name="Brooks S.Y."/>
            <person name="Carninci P."/>
            <person name="Chao Q."/>
            <person name="Choy N."/>
            <person name="Enju A."/>
            <person name="Goldsmith A.D."/>
            <person name="Gurjal M."/>
            <person name="Hansen N.F."/>
            <person name="Hayashizaki Y."/>
            <person name="Johnson-Hopson C."/>
            <person name="Hsuan V.W."/>
            <person name="Iida K."/>
            <person name="Karnes M."/>
            <person name="Khan S."/>
            <person name="Koesema E."/>
            <person name="Ishida J."/>
            <person name="Jiang P.X."/>
            <person name="Jones T."/>
            <person name="Kawai J."/>
            <person name="Kamiya A."/>
            <person name="Meyers C."/>
            <person name="Nakajima M."/>
            <person name="Narusaka M."/>
            <person name="Seki M."/>
            <person name="Sakurai T."/>
            <person name="Satou M."/>
            <person name="Tamse R."/>
            <person name="Vaysberg M."/>
            <person name="Wallender E.K."/>
            <person name="Wong C."/>
            <person name="Yamamura Y."/>
            <person name="Yuan S."/>
            <person name="Shinozaki K."/>
            <person name="Davis R.W."/>
            <person name="Theologis A."/>
            <person name="Ecker J.R."/>
        </authorList>
    </citation>
    <scope>NUCLEOTIDE SEQUENCE [LARGE SCALE MRNA] OF 2-550</scope>
    <source>
        <strain>cv. Columbia</strain>
    </source>
</reference>
<reference key="5">
    <citation type="journal article" date="2003" name="Plant Physiol.">
        <title>Arabidopsis contains a large superfamily of acyl-activating enzymes. Phylogenetic and biochemical analysis reveals a new class of acyl-coenzyme a synthetases.</title>
        <authorList>
            <person name="Shockey J.M."/>
            <person name="Fulda M.S."/>
            <person name="Browse J."/>
        </authorList>
    </citation>
    <scope>TISSUE SPECIFICITY</scope>
    <scope>GENE FAMILY</scope>
    <scope>NOMENCLATURE</scope>
</reference>
<organism>
    <name type="scientific">Arabidopsis thaliana</name>
    <name type="common">Mouse-ear cress</name>
    <dbReference type="NCBI Taxonomy" id="3702"/>
    <lineage>
        <taxon>Eukaryota</taxon>
        <taxon>Viridiplantae</taxon>
        <taxon>Streptophyta</taxon>
        <taxon>Embryophyta</taxon>
        <taxon>Tracheophyta</taxon>
        <taxon>Spermatophyta</taxon>
        <taxon>Magnoliopsida</taxon>
        <taxon>eudicotyledons</taxon>
        <taxon>Gunneridae</taxon>
        <taxon>Pentapetalae</taxon>
        <taxon>rosids</taxon>
        <taxon>malvids</taxon>
        <taxon>Brassicales</taxon>
        <taxon>Brassicaceae</taxon>
        <taxon>Camelineae</taxon>
        <taxon>Arabidopsis</taxon>
    </lineage>
</organism>
<comment type="function">
    <text evidence="1">May act as an acid--thiol ligase that activates carboxylic acids by forming acyl-CoAs.</text>
</comment>
<comment type="tissue specificity">
    <text evidence="2">Expressed at low levels in roots, leaves, stems and developing seeds.</text>
</comment>
<comment type="similarity">
    <text evidence="3">Belongs to the ATP-dependent AMP-binding enzyme family.</text>
</comment>